<dbReference type="EMBL" id="BA000043">
    <property type="protein sequence ID" value="BAD75629.1"/>
    <property type="molecule type" value="Genomic_DNA"/>
</dbReference>
<dbReference type="RefSeq" id="WP_011230843.1">
    <property type="nucleotide sequence ID" value="NC_006510.1"/>
</dbReference>
<dbReference type="STRING" id="235909.GK1344"/>
<dbReference type="KEGG" id="gka:GK1344"/>
<dbReference type="eggNOG" id="ENOG5032ZXB">
    <property type="taxonomic scope" value="Bacteria"/>
</dbReference>
<dbReference type="HOGENOM" id="CLU_210130_1_0_9"/>
<dbReference type="Proteomes" id="UP000001172">
    <property type="component" value="Chromosome"/>
</dbReference>
<dbReference type="GO" id="GO:0030436">
    <property type="term" value="P:asexual sporulation"/>
    <property type="evidence" value="ECO:0007669"/>
    <property type="project" value="UniProtKB-UniRule"/>
</dbReference>
<dbReference type="GO" id="GO:0030435">
    <property type="term" value="P:sporulation resulting in formation of a cellular spore"/>
    <property type="evidence" value="ECO:0007669"/>
    <property type="project" value="UniProtKB-KW"/>
</dbReference>
<dbReference type="HAMAP" id="MF_00666">
    <property type="entry name" value="SspP"/>
    <property type="match status" value="1"/>
</dbReference>
<dbReference type="InterPro" id="IPR012614">
    <property type="entry name" value="SASP_SspP"/>
</dbReference>
<dbReference type="NCBIfam" id="NF006905">
    <property type="entry name" value="PRK09399.1"/>
    <property type="match status" value="1"/>
</dbReference>
<dbReference type="Pfam" id="PF08179">
    <property type="entry name" value="SspP"/>
    <property type="match status" value="1"/>
</dbReference>
<reference key="1">
    <citation type="journal article" date="2004" name="Nucleic Acids Res.">
        <title>Thermoadaptation trait revealed by the genome sequence of thermophilic Geobacillus kaustophilus.</title>
        <authorList>
            <person name="Takami H."/>
            <person name="Takaki Y."/>
            <person name="Chee G.-J."/>
            <person name="Nishi S."/>
            <person name="Shimamura S."/>
            <person name="Suzuki H."/>
            <person name="Matsui S."/>
            <person name="Uchiyama I."/>
        </authorList>
    </citation>
    <scope>NUCLEOTIDE SEQUENCE [LARGE SCALE GENOMIC DNA]</scope>
    <source>
        <strain>HTA426</strain>
    </source>
</reference>
<protein>
    <recommendedName>
        <fullName evidence="1">Small, acid-soluble spore protein P</fullName>
        <shortName evidence="1">SASP P</shortName>
    </recommendedName>
</protein>
<accession>Q5L0A7</accession>
<evidence type="ECO:0000255" key="1">
    <source>
        <dbReference type="HAMAP-Rule" id="MF_00666"/>
    </source>
</evidence>
<evidence type="ECO:0000256" key="2">
    <source>
        <dbReference type="SAM" id="MobiDB-lite"/>
    </source>
</evidence>
<gene>
    <name evidence="1" type="primary">sspP</name>
    <name type="ordered locus">GK1344</name>
</gene>
<organism>
    <name type="scientific">Geobacillus kaustophilus (strain HTA426)</name>
    <dbReference type="NCBI Taxonomy" id="235909"/>
    <lineage>
        <taxon>Bacteria</taxon>
        <taxon>Bacillati</taxon>
        <taxon>Bacillota</taxon>
        <taxon>Bacilli</taxon>
        <taxon>Bacillales</taxon>
        <taxon>Anoxybacillaceae</taxon>
        <taxon>Geobacillus</taxon>
        <taxon>Geobacillus thermoleovorans group</taxon>
    </lineage>
</organism>
<comment type="subcellular location">
    <subcellularLocation>
        <location evidence="1">Spore core</location>
    </subcellularLocation>
</comment>
<comment type="induction">
    <text evidence="1">Expressed only in the forespore compartment of sporulating cells.</text>
</comment>
<comment type="similarity">
    <text evidence="1">Belongs to the SspP family.</text>
</comment>
<feature type="chain" id="PRO_0000217215" description="Small, acid-soluble spore protein P">
    <location>
        <begin position="1"/>
        <end position="48"/>
    </location>
</feature>
<feature type="region of interest" description="Disordered" evidence="2">
    <location>
        <begin position="1"/>
        <end position="48"/>
    </location>
</feature>
<feature type="compositionally biased region" description="Basic and acidic residues" evidence="2">
    <location>
        <begin position="1"/>
        <end position="12"/>
    </location>
</feature>
<feature type="compositionally biased region" description="Basic residues" evidence="2">
    <location>
        <begin position="31"/>
        <end position="48"/>
    </location>
</feature>
<sequence>MTNKNDGKDMRKNAPKGDNPGQPEPLDGSKKVKNRNHTRQKHNTSHDM</sequence>
<proteinExistence type="inferred from homology"/>
<keyword id="KW-1185">Reference proteome</keyword>
<keyword id="KW-0749">Sporulation</keyword>
<name>SSPP_GEOKA</name>